<keyword id="KW-0002">3D-structure</keyword>
<keyword id="KW-0007">Acetylation</keyword>
<keyword id="KW-0025">Alternative splicing</keyword>
<keyword id="KW-0647">Proteasome</keyword>
<keyword id="KW-1267">Proteomics identification</keyword>
<keyword id="KW-1185">Reference proteome</keyword>
<protein>
    <recommendedName>
        <fullName>26S proteasome non-ATPase regulatory subunit 13</fullName>
    </recommendedName>
    <alternativeName>
        <fullName>26S proteasome regulatory subunit RPN9</fullName>
    </alternativeName>
    <alternativeName>
        <fullName>26S proteasome regulatory subunit S11</fullName>
    </alternativeName>
    <alternativeName>
        <fullName>26S proteasome regulatory subunit p40.5</fullName>
    </alternativeName>
</protein>
<feature type="chain" id="PRO_0000173867" description="26S proteasome non-ATPase regulatory subunit 13">
    <location>
        <begin position="1"/>
        <end position="376"/>
    </location>
</feature>
<feature type="domain" description="PCI" evidence="1">
    <location>
        <begin position="171"/>
        <end position="338"/>
    </location>
</feature>
<feature type="modified residue" description="N6-acetyllysine" evidence="13">
    <location>
        <position position="298"/>
    </location>
</feature>
<feature type="splice variant" id="VSP_041067" description="In isoform 2." evidence="10">
    <original>KLWHQLTLQVLDFVQDPCFAQGDGLIKLYENFISEFEH</original>
    <variation>NFMKTLSVNLNTGKSLSSVFHFENECIDARRCSKAGGFYF</variation>
    <location>
        <begin position="32"/>
        <end position="69"/>
    </location>
</feature>
<feature type="sequence variant" id="VAR_024591" description="In dbSNP:rs1045288." evidence="2 4 7 8 9 12">
    <original>N</original>
    <variation>S</variation>
    <location>
        <position position="13"/>
    </location>
</feature>
<feature type="sequence variant" id="VAR_057050" description="In dbSNP:rs28927679.">
    <original>S</original>
    <variation>L</variation>
    <location>
        <position position="150"/>
    </location>
</feature>
<feature type="sequence variant" id="VAR_031094" description="In dbSNP:rs1794108.">
    <original>G</original>
    <variation>E</variation>
    <location>
        <position position="204"/>
    </location>
</feature>
<feature type="sequence variant" id="VAR_031095" description="In dbSNP:rs1794109.">
    <original>L</original>
    <variation>F</variation>
    <location>
        <position position="205"/>
    </location>
</feature>
<feature type="sequence conflict" description="In Ref. 3; AAC64104." evidence="11" ref="3">
    <original>T</original>
    <variation>I</variation>
    <location>
        <position position="253"/>
    </location>
</feature>
<feature type="helix" evidence="14">
    <location>
        <begin position="5"/>
        <end position="10"/>
    </location>
</feature>
<feature type="turn" evidence="14">
    <location>
        <begin position="11"/>
        <end position="14"/>
    </location>
</feature>
<feature type="strand" evidence="14">
    <location>
        <begin position="15"/>
        <end position="17"/>
    </location>
</feature>
<feature type="helix" evidence="14">
    <location>
        <begin position="18"/>
        <end position="21"/>
    </location>
</feature>
<feature type="helix" evidence="14">
    <location>
        <begin position="23"/>
        <end position="30"/>
    </location>
</feature>
<feature type="helix" evidence="14">
    <location>
        <begin position="36"/>
        <end position="46"/>
    </location>
</feature>
<feature type="strand" evidence="14">
    <location>
        <begin position="47"/>
        <end position="49"/>
    </location>
</feature>
<feature type="helix" evidence="14">
    <location>
        <begin position="54"/>
        <end position="66"/>
    </location>
</feature>
<feature type="strand" evidence="14">
    <location>
        <begin position="69"/>
        <end position="71"/>
    </location>
</feature>
<feature type="helix" evidence="14">
    <location>
        <begin position="73"/>
        <end position="87"/>
    </location>
</feature>
<feature type="helix" evidence="14">
    <location>
        <begin position="90"/>
        <end position="103"/>
    </location>
</feature>
<feature type="helix" evidence="14">
    <location>
        <begin position="110"/>
        <end position="122"/>
    </location>
</feature>
<feature type="helix" evidence="14">
    <location>
        <begin position="131"/>
        <end position="141"/>
    </location>
</feature>
<feature type="helix" evidence="14">
    <location>
        <begin position="150"/>
        <end position="161"/>
    </location>
</feature>
<feature type="helix" evidence="14">
    <location>
        <begin position="162"/>
        <end position="164"/>
    </location>
</feature>
<feature type="helix" evidence="14">
    <location>
        <begin position="170"/>
        <end position="182"/>
    </location>
</feature>
<feature type="helix" evidence="14">
    <location>
        <begin position="190"/>
        <end position="204"/>
    </location>
</feature>
<feature type="helix" evidence="14">
    <location>
        <begin position="215"/>
        <end position="218"/>
    </location>
</feature>
<feature type="helix" evidence="14">
    <location>
        <begin position="220"/>
        <end position="224"/>
    </location>
</feature>
<feature type="turn" evidence="14">
    <location>
        <begin position="229"/>
        <end position="231"/>
    </location>
</feature>
<feature type="helix" evidence="14">
    <location>
        <begin position="232"/>
        <end position="240"/>
    </location>
</feature>
<feature type="helix" evidence="14">
    <location>
        <begin position="247"/>
        <end position="255"/>
    </location>
</feature>
<feature type="turn" evidence="14">
    <location>
        <begin position="259"/>
        <end position="261"/>
    </location>
</feature>
<feature type="helix" evidence="14">
    <location>
        <begin position="262"/>
        <end position="264"/>
    </location>
</feature>
<feature type="helix" evidence="14">
    <location>
        <begin position="265"/>
        <end position="283"/>
    </location>
</feature>
<feature type="helix" evidence="14">
    <location>
        <begin position="293"/>
        <end position="299"/>
    </location>
</feature>
<feature type="helix" evidence="14">
    <location>
        <begin position="304"/>
        <end position="317"/>
    </location>
</feature>
<feature type="strand" evidence="14">
    <location>
        <begin position="323"/>
        <end position="328"/>
    </location>
</feature>
<feature type="helix" evidence="14">
    <location>
        <begin position="343"/>
        <end position="368"/>
    </location>
</feature>
<feature type="turn" evidence="14">
    <location>
        <begin position="369"/>
        <end position="371"/>
    </location>
</feature>
<feature type="helix" evidence="14">
    <location>
        <begin position="372"/>
        <end position="375"/>
    </location>
</feature>
<accession>Q9UNM6</accession>
<accession>B3KT15</accession>
<accession>O75831</accession>
<accession>Q53XU2</accession>
<accession>Q9UNV3</accession>
<proteinExistence type="evidence at protein level"/>
<reference key="1">
    <citation type="journal article" date="1998" name="Gene">
        <title>cDNA cloning and functional analysis of p28 (Nas6p) and p40.5 (Nas7p), two novel regulatory subunits of the 26S proteasome.</title>
        <authorList>
            <person name="Hori T."/>
            <person name="Kato S."/>
            <person name="Saeki M."/>
            <person name="DeMartino G.N."/>
            <person name="Slaughter C.A."/>
            <person name="Takeuchi J."/>
            <person name="Toh-e A."/>
            <person name="Tanaka K."/>
        </authorList>
    </citation>
    <scope>NUCLEOTIDE SEQUENCE [MRNA] (ISOFORM 1)</scope>
</reference>
<reference key="2">
    <citation type="submission" date="1998-11" db="EMBL/GenBank/DDBJ databases">
        <title>Cloning of the human 26S proteasome subunit p40.5.</title>
        <authorList>
            <person name="Ting M.C."/>
            <person name="Chang L.Y."/>
        </authorList>
    </citation>
    <scope>NUCLEOTIDE SEQUENCE [MRNA] (ISOFORM 1)</scope>
    <scope>VARIANT SER-13</scope>
    <source>
        <tissue>Liver</tissue>
    </source>
</reference>
<reference key="3">
    <citation type="journal article" date="1999" name="FEBS Lett.">
        <title>Identification, molecular cloning, and characterization of subunit 11 of the human 26S proteasome.</title>
        <authorList>
            <person name="Hoffman L."/>
            <person name="Gorbea C."/>
            <person name="Rechsteiner M."/>
        </authorList>
    </citation>
    <scope>NUCLEOTIDE SEQUENCE [MRNA] (ISOFORM 1)</scope>
    <scope>VARIANT SER-13</scope>
</reference>
<reference key="4">
    <citation type="submission" date="2003-05" db="EMBL/GenBank/DDBJ databases">
        <title>Cloning of human full-length CDSs in BD Creator(TM) system donor vector.</title>
        <authorList>
            <person name="Kalnine N."/>
            <person name="Chen X."/>
            <person name="Rolfs A."/>
            <person name="Halleck A."/>
            <person name="Hines L."/>
            <person name="Eisenstein S."/>
            <person name="Koundinya M."/>
            <person name="Raphael J."/>
            <person name="Moreira D."/>
            <person name="Kelley T."/>
            <person name="LaBaer J."/>
            <person name="Lin Y."/>
            <person name="Phelan M."/>
            <person name="Farmer A."/>
        </authorList>
    </citation>
    <scope>NUCLEOTIDE SEQUENCE [LARGE SCALE MRNA] (ISOFORM 1)</scope>
    <scope>VARIANT SER-13</scope>
</reference>
<reference key="5">
    <citation type="journal article" date="2004" name="Nat. Genet.">
        <title>Complete sequencing and characterization of 21,243 full-length human cDNAs.</title>
        <authorList>
            <person name="Ota T."/>
            <person name="Suzuki Y."/>
            <person name="Nishikawa T."/>
            <person name="Otsuki T."/>
            <person name="Sugiyama T."/>
            <person name="Irie R."/>
            <person name="Wakamatsu A."/>
            <person name="Hayashi K."/>
            <person name="Sato H."/>
            <person name="Nagai K."/>
            <person name="Kimura K."/>
            <person name="Makita H."/>
            <person name="Sekine M."/>
            <person name="Obayashi M."/>
            <person name="Nishi T."/>
            <person name="Shibahara T."/>
            <person name="Tanaka T."/>
            <person name="Ishii S."/>
            <person name="Yamamoto J."/>
            <person name="Saito K."/>
            <person name="Kawai Y."/>
            <person name="Isono Y."/>
            <person name="Nakamura Y."/>
            <person name="Nagahari K."/>
            <person name="Murakami K."/>
            <person name="Yasuda T."/>
            <person name="Iwayanagi T."/>
            <person name="Wagatsuma M."/>
            <person name="Shiratori A."/>
            <person name="Sudo H."/>
            <person name="Hosoiri T."/>
            <person name="Kaku Y."/>
            <person name="Kodaira H."/>
            <person name="Kondo H."/>
            <person name="Sugawara M."/>
            <person name="Takahashi M."/>
            <person name="Kanda K."/>
            <person name="Yokoi T."/>
            <person name="Furuya T."/>
            <person name="Kikkawa E."/>
            <person name="Omura Y."/>
            <person name="Abe K."/>
            <person name="Kamihara K."/>
            <person name="Katsuta N."/>
            <person name="Sato K."/>
            <person name="Tanikawa M."/>
            <person name="Yamazaki M."/>
            <person name="Ninomiya K."/>
            <person name="Ishibashi T."/>
            <person name="Yamashita H."/>
            <person name="Murakawa K."/>
            <person name="Fujimori K."/>
            <person name="Tanai H."/>
            <person name="Kimata M."/>
            <person name="Watanabe M."/>
            <person name="Hiraoka S."/>
            <person name="Chiba Y."/>
            <person name="Ishida S."/>
            <person name="Ono Y."/>
            <person name="Takiguchi S."/>
            <person name="Watanabe S."/>
            <person name="Yosida M."/>
            <person name="Hotuta T."/>
            <person name="Kusano J."/>
            <person name="Kanehori K."/>
            <person name="Takahashi-Fujii A."/>
            <person name="Hara H."/>
            <person name="Tanase T.-O."/>
            <person name="Nomura Y."/>
            <person name="Togiya S."/>
            <person name="Komai F."/>
            <person name="Hara R."/>
            <person name="Takeuchi K."/>
            <person name="Arita M."/>
            <person name="Imose N."/>
            <person name="Musashino K."/>
            <person name="Yuuki H."/>
            <person name="Oshima A."/>
            <person name="Sasaki N."/>
            <person name="Aotsuka S."/>
            <person name="Yoshikawa Y."/>
            <person name="Matsunawa H."/>
            <person name="Ichihara T."/>
            <person name="Shiohata N."/>
            <person name="Sano S."/>
            <person name="Moriya S."/>
            <person name="Momiyama H."/>
            <person name="Satoh N."/>
            <person name="Takami S."/>
            <person name="Terashima Y."/>
            <person name="Suzuki O."/>
            <person name="Nakagawa S."/>
            <person name="Senoh A."/>
            <person name="Mizoguchi H."/>
            <person name="Goto Y."/>
            <person name="Shimizu F."/>
            <person name="Wakebe H."/>
            <person name="Hishigaki H."/>
            <person name="Watanabe T."/>
            <person name="Sugiyama A."/>
            <person name="Takemoto M."/>
            <person name="Kawakami B."/>
            <person name="Yamazaki M."/>
            <person name="Watanabe K."/>
            <person name="Kumagai A."/>
            <person name="Itakura S."/>
            <person name="Fukuzumi Y."/>
            <person name="Fujimori Y."/>
            <person name="Komiyama M."/>
            <person name="Tashiro H."/>
            <person name="Tanigami A."/>
            <person name="Fujiwara T."/>
            <person name="Ono T."/>
            <person name="Yamada K."/>
            <person name="Fujii Y."/>
            <person name="Ozaki K."/>
            <person name="Hirao M."/>
            <person name="Ohmori Y."/>
            <person name="Kawabata A."/>
            <person name="Hikiji T."/>
            <person name="Kobatake N."/>
            <person name="Inagaki H."/>
            <person name="Ikema Y."/>
            <person name="Okamoto S."/>
            <person name="Okitani R."/>
            <person name="Kawakami T."/>
            <person name="Noguchi S."/>
            <person name="Itoh T."/>
            <person name="Shigeta K."/>
            <person name="Senba T."/>
            <person name="Matsumura K."/>
            <person name="Nakajima Y."/>
            <person name="Mizuno T."/>
            <person name="Morinaga M."/>
            <person name="Sasaki M."/>
            <person name="Togashi T."/>
            <person name="Oyama M."/>
            <person name="Hata H."/>
            <person name="Watanabe M."/>
            <person name="Komatsu T."/>
            <person name="Mizushima-Sugano J."/>
            <person name="Satoh T."/>
            <person name="Shirai Y."/>
            <person name="Takahashi Y."/>
            <person name="Nakagawa K."/>
            <person name="Okumura K."/>
            <person name="Nagase T."/>
            <person name="Nomura N."/>
            <person name="Kikuchi H."/>
            <person name="Masuho Y."/>
            <person name="Yamashita R."/>
            <person name="Nakai K."/>
            <person name="Yada T."/>
            <person name="Nakamura Y."/>
            <person name="Ohara O."/>
            <person name="Isogai T."/>
            <person name="Sugano S."/>
        </authorList>
    </citation>
    <scope>NUCLEOTIDE SEQUENCE [LARGE SCALE MRNA] (ISOFORM 2)</scope>
    <source>
        <tissue>Brain</tissue>
    </source>
</reference>
<reference key="6">
    <citation type="journal article" date="2006" name="Nature">
        <title>Human chromosome 11 DNA sequence and analysis including novel gene identification.</title>
        <authorList>
            <person name="Taylor T.D."/>
            <person name="Noguchi H."/>
            <person name="Totoki Y."/>
            <person name="Toyoda A."/>
            <person name="Kuroki Y."/>
            <person name="Dewar K."/>
            <person name="Lloyd C."/>
            <person name="Itoh T."/>
            <person name="Takeda T."/>
            <person name="Kim D.-W."/>
            <person name="She X."/>
            <person name="Barlow K.F."/>
            <person name="Bloom T."/>
            <person name="Bruford E."/>
            <person name="Chang J.L."/>
            <person name="Cuomo C.A."/>
            <person name="Eichler E."/>
            <person name="FitzGerald M.G."/>
            <person name="Jaffe D.B."/>
            <person name="LaButti K."/>
            <person name="Nicol R."/>
            <person name="Park H.-S."/>
            <person name="Seaman C."/>
            <person name="Sougnez C."/>
            <person name="Yang X."/>
            <person name="Zimmer A.R."/>
            <person name="Zody M.C."/>
            <person name="Birren B.W."/>
            <person name="Nusbaum C."/>
            <person name="Fujiyama A."/>
            <person name="Hattori M."/>
            <person name="Rogers J."/>
            <person name="Lander E.S."/>
            <person name="Sakaki Y."/>
        </authorList>
    </citation>
    <scope>NUCLEOTIDE SEQUENCE [LARGE SCALE GENOMIC DNA]</scope>
</reference>
<reference key="7">
    <citation type="submission" date="2005-07" db="EMBL/GenBank/DDBJ databases">
        <authorList>
            <person name="Mural R.J."/>
            <person name="Istrail S."/>
            <person name="Sutton G.G."/>
            <person name="Florea L."/>
            <person name="Halpern A.L."/>
            <person name="Mobarry C.M."/>
            <person name="Lippert R."/>
            <person name="Walenz B."/>
            <person name="Shatkay H."/>
            <person name="Dew I."/>
            <person name="Miller J.R."/>
            <person name="Flanigan M.J."/>
            <person name="Edwards N.J."/>
            <person name="Bolanos R."/>
            <person name="Fasulo D."/>
            <person name="Halldorsson B.V."/>
            <person name="Hannenhalli S."/>
            <person name="Turner R."/>
            <person name="Yooseph S."/>
            <person name="Lu F."/>
            <person name="Nusskern D.R."/>
            <person name="Shue B.C."/>
            <person name="Zheng X.H."/>
            <person name="Zhong F."/>
            <person name="Delcher A.L."/>
            <person name="Huson D.H."/>
            <person name="Kravitz S.A."/>
            <person name="Mouchard L."/>
            <person name="Reinert K."/>
            <person name="Remington K.A."/>
            <person name="Clark A.G."/>
            <person name="Waterman M.S."/>
            <person name="Eichler E.E."/>
            <person name="Adams M.D."/>
            <person name="Hunkapiller M.W."/>
            <person name="Myers E.W."/>
            <person name="Venter J.C."/>
        </authorList>
    </citation>
    <scope>NUCLEOTIDE SEQUENCE [LARGE SCALE GENOMIC DNA]</scope>
    <scope>VARIANT SER-13</scope>
</reference>
<reference key="8">
    <citation type="journal article" date="2004" name="Genome Res.">
        <title>The status, quality, and expansion of the NIH full-length cDNA project: the Mammalian Gene Collection (MGC).</title>
        <authorList>
            <consortium name="The MGC Project Team"/>
        </authorList>
    </citation>
    <scope>NUCLEOTIDE SEQUENCE [LARGE SCALE MRNA]</scope>
    <scope>VARIANT SER-13</scope>
    <source>
        <tissue>Kidney</tissue>
        <tissue>Lung</tissue>
    </source>
</reference>
<reference key="9">
    <citation type="journal article" date="1992" name="Eur. J. Biochem.">
        <title>Demonstration that a human 26S proteolytic complex consists of a proteasome and multiple associated protein components and hydrolyzes ATP and ubiquitin-ligated proteins by closely linked mechanisms.</title>
        <authorList>
            <person name="Kanayama H.O."/>
            <person name="Tamura T."/>
            <person name="Ugai S."/>
            <person name="Kagawa S."/>
            <person name="Tanahashi N."/>
            <person name="Yoshimura T."/>
            <person name="Tanaka K."/>
            <person name="Ichihara A."/>
        </authorList>
    </citation>
    <scope>FUNCTION</scope>
</reference>
<reference key="10">
    <citation type="journal article" date="2003" name="Nature">
        <title>Proteomic characterization of the human centrosome by protein correlation profiling.</title>
        <authorList>
            <person name="Andersen J.S."/>
            <person name="Wilkinson C.J."/>
            <person name="Mayor T."/>
            <person name="Mortensen P."/>
            <person name="Nigg E.A."/>
            <person name="Mann M."/>
        </authorList>
    </citation>
    <scope>IDENTIFICATION BY MASS SPECTROMETRY</scope>
    <source>
        <tissue>Lymphoblast</tissue>
    </source>
</reference>
<reference key="11">
    <citation type="journal article" date="2009" name="Science">
        <title>Lysine acetylation targets protein complexes and co-regulates major cellular functions.</title>
        <authorList>
            <person name="Choudhary C."/>
            <person name="Kumar C."/>
            <person name="Gnad F."/>
            <person name="Nielsen M.L."/>
            <person name="Rehman M."/>
            <person name="Walther T.C."/>
            <person name="Olsen J.V."/>
            <person name="Mann M."/>
        </authorList>
    </citation>
    <scope>ACETYLATION [LARGE SCALE ANALYSIS] AT LYS-298</scope>
    <scope>IDENTIFICATION BY MASS SPECTROMETRY [LARGE SCALE ANALYSIS]</scope>
</reference>
<reference key="12">
    <citation type="journal article" date="2011" name="BMC Syst. Biol.">
        <title>Initial characterization of the human central proteome.</title>
        <authorList>
            <person name="Burkard T.R."/>
            <person name="Planyavsky M."/>
            <person name="Kaupe I."/>
            <person name="Breitwieser F.P."/>
            <person name="Buerckstuemmer T."/>
            <person name="Bennett K.L."/>
            <person name="Superti-Furga G."/>
            <person name="Colinge J."/>
        </authorList>
    </citation>
    <scope>IDENTIFICATION BY MASS SPECTROMETRY [LARGE SCALE ANALYSIS]</scope>
</reference>
<reference key="13">
    <citation type="journal article" date="2015" name="Proteomics">
        <title>N-terminome analysis of the human mitochondrial proteome.</title>
        <authorList>
            <person name="Vaca Jacome A.S."/>
            <person name="Rabilloud T."/>
            <person name="Schaeffer-Reiss C."/>
            <person name="Rompais M."/>
            <person name="Ayoub D."/>
            <person name="Lane L."/>
            <person name="Bairoch A."/>
            <person name="Van Dorsselaer A."/>
            <person name="Carapito C."/>
        </authorList>
    </citation>
    <scope>IDENTIFICATION BY MASS SPECTROMETRY [LARGE SCALE ANALYSIS]</scope>
</reference>
<reference key="14">
    <citation type="journal article" date="2016" name="Nat. Struct. Mol. Biol.">
        <title>An atomic structure of the human 26S proteasome.</title>
        <authorList>
            <person name="Huang X."/>
            <person name="Luan B."/>
            <person name="Wu J."/>
            <person name="Shi Y."/>
        </authorList>
    </citation>
    <scope>STRUCTURE BY ELECTRON MICROSCOPY (3.50 ANGSTROMS) OF 1-389</scope>
    <scope>SUBUNIT</scope>
</reference>
<reference key="15">
    <citation type="journal article" date="2016" name="Proc. Natl. Acad. Sci. U.S.A.">
        <title>Structure of the human 26S proteasome at a resolution of 3.9 Aa.</title>
        <authorList>
            <person name="Schweitzer A."/>
            <person name="Aufderheide A."/>
            <person name="Rudack T."/>
            <person name="Beck F."/>
            <person name="Pfeifer G."/>
            <person name="Plitzko J.M."/>
            <person name="Sakata E."/>
            <person name="Schulten K."/>
            <person name="Foerster F."/>
            <person name="Baumeister W."/>
        </authorList>
    </citation>
    <scope>STRUCTURE BY ELECTRON MICROSCOPY (4.50 ANGSTROMS) OF 1-389</scope>
    <scope>SUBUNIT</scope>
</reference>
<reference key="16">
    <citation type="journal article" date="2007" name="Biochemistry">
        <title>Mass spectrometric characterization of the affinity-purified human 26S proteasome complex.</title>
        <authorList>
            <person name="Wang X."/>
            <person name="Chen C.-F."/>
            <person name="Baker P.R."/>
            <person name="Chen P.-L."/>
            <person name="Kaiser P."/>
            <person name="Huang L."/>
        </authorList>
    </citation>
    <scope>VARIANT [LARGE SCALE ANALYSIS] SER-13</scope>
    <scope>IDENTIFICATION BY MASS SPECTROMETRY [LARGE SCALE ANALYSIS]</scope>
    <source>
        <tissue>Embryonic kidney</tissue>
    </source>
</reference>
<comment type="function">
    <text evidence="3">Component of the 26S proteasome, a multiprotein complex involved in the ATP-dependent degradation of ubiquitinated proteins. This complex plays a key role in the maintenance of protein homeostasis by removing misfolded or damaged proteins, which could impair cellular functions, and by removing proteins whose functions are no longer required. Therefore, the proteasome participates in numerous cellular processes, including cell cycle progression, apoptosis, or DNA damage repair.</text>
</comment>
<comment type="subunit">
    <text evidence="5 6">Component of the 19S proteasome regulatory particle complex. The 26S proteasome consists of a 20S core particle (CP) and two 19S regulatory subunits (RP). The regulatory particle is made of a lid composed of 9 subunits including PSMD13, a base containing 6 ATPases and few additional components.</text>
</comment>
<comment type="interaction">
    <interactant intactId="EBI-356070">
        <id>Q9UNM6</id>
    </interactant>
    <interactant intactId="EBI-359318">
        <id>P55036</id>
        <label>PSMD4</label>
    </interactant>
    <organismsDiffer>false</organismsDiffer>
    <experiments>4</experiments>
</comment>
<comment type="alternative products">
    <event type="alternative splicing"/>
    <isoform>
        <id>Q9UNM6-1</id>
        <name>1</name>
        <sequence type="displayed"/>
    </isoform>
    <isoform>
        <id>Q9UNM6-2</id>
        <name>2</name>
        <sequence type="described" ref="VSP_041067"/>
    </isoform>
</comment>
<comment type="similarity">
    <text evidence="11">Belongs to the proteasome subunit S11 family.</text>
</comment>
<gene>
    <name type="primary">PSMD13</name>
</gene>
<name>PSD13_HUMAN</name>
<dbReference type="EMBL" id="AB009398">
    <property type="protein sequence ID" value="BAA33214.1"/>
    <property type="molecule type" value="mRNA"/>
</dbReference>
<dbReference type="EMBL" id="AF107837">
    <property type="protein sequence ID" value="AAD43442.1"/>
    <property type="molecule type" value="mRNA"/>
</dbReference>
<dbReference type="EMBL" id="AF086708">
    <property type="protein sequence ID" value="AAC64104.1"/>
    <property type="molecule type" value="mRNA"/>
</dbReference>
<dbReference type="EMBL" id="BT007307">
    <property type="protein sequence ID" value="AAP35971.1"/>
    <property type="molecule type" value="mRNA"/>
</dbReference>
<dbReference type="EMBL" id="AK094775">
    <property type="protein sequence ID" value="BAG52927.1"/>
    <property type="molecule type" value="mRNA"/>
</dbReference>
<dbReference type="EMBL" id="AC136475">
    <property type="status" value="NOT_ANNOTATED_CDS"/>
    <property type="molecule type" value="Genomic_DNA"/>
</dbReference>
<dbReference type="EMBL" id="CH471278">
    <property type="protein sequence ID" value="EAW61234.1"/>
    <property type="molecule type" value="Genomic_DNA"/>
</dbReference>
<dbReference type="EMBL" id="BC001100">
    <property type="protein sequence ID" value="AAH01100.1"/>
    <property type="molecule type" value="mRNA"/>
</dbReference>
<dbReference type="EMBL" id="BC001747">
    <property type="protein sequence ID" value="AAH01747.1"/>
    <property type="molecule type" value="mRNA"/>
</dbReference>
<dbReference type="CCDS" id="CCDS44504.1">
    <molecule id="Q9UNM6-2"/>
</dbReference>
<dbReference type="CCDS" id="CCDS7692.1">
    <molecule id="Q9UNM6-1"/>
</dbReference>
<dbReference type="RefSeq" id="NP_002808.3">
    <molecule id="Q9UNM6-1"/>
    <property type="nucleotide sequence ID" value="NM_002817.3"/>
</dbReference>
<dbReference type="RefSeq" id="NP_787128.2">
    <molecule id="Q9UNM6-2"/>
    <property type="nucleotide sequence ID" value="NM_175932.3"/>
</dbReference>
<dbReference type="PDB" id="5GJQ">
    <property type="method" value="EM"/>
    <property type="resolution" value="4.50 A"/>
    <property type="chains" value="O=1-376"/>
</dbReference>
<dbReference type="PDB" id="5GJR">
    <property type="method" value="EM"/>
    <property type="resolution" value="3.50 A"/>
    <property type="chains" value="2/O=1-376"/>
</dbReference>
<dbReference type="PDB" id="5L4K">
    <property type="method" value="EM"/>
    <property type="resolution" value="4.50 A"/>
    <property type="chains" value="O=1-376"/>
</dbReference>
<dbReference type="PDB" id="5LN3">
    <property type="method" value="EM"/>
    <property type="resolution" value="6.80 A"/>
    <property type="chains" value="O=1-376"/>
</dbReference>
<dbReference type="PDB" id="5M32">
    <property type="method" value="EM"/>
    <property type="resolution" value="3.80 A"/>
    <property type="chains" value="o=1-376"/>
</dbReference>
<dbReference type="PDB" id="5T0C">
    <property type="method" value="EM"/>
    <property type="resolution" value="3.80 A"/>
    <property type="chains" value="Aa/Ba=1-376"/>
</dbReference>
<dbReference type="PDB" id="5T0G">
    <property type="method" value="EM"/>
    <property type="resolution" value="4.40 A"/>
    <property type="chains" value="a=1-376"/>
</dbReference>
<dbReference type="PDB" id="5T0H">
    <property type="method" value="EM"/>
    <property type="resolution" value="6.80 A"/>
    <property type="chains" value="a=1-376"/>
</dbReference>
<dbReference type="PDB" id="5T0I">
    <property type="method" value="EM"/>
    <property type="resolution" value="8.00 A"/>
    <property type="chains" value="a=1-376"/>
</dbReference>
<dbReference type="PDB" id="5T0J">
    <property type="method" value="EM"/>
    <property type="resolution" value="8.00 A"/>
    <property type="chains" value="a=1-376"/>
</dbReference>
<dbReference type="PDB" id="5VFP">
    <property type="method" value="EM"/>
    <property type="resolution" value="4.20 A"/>
    <property type="chains" value="a=4-376"/>
</dbReference>
<dbReference type="PDB" id="5VFQ">
    <property type="method" value="EM"/>
    <property type="resolution" value="4.20 A"/>
    <property type="chains" value="a=4-376"/>
</dbReference>
<dbReference type="PDB" id="5VFR">
    <property type="method" value="EM"/>
    <property type="resolution" value="4.90 A"/>
    <property type="chains" value="a=4-376"/>
</dbReference>
<dbReference type="PDB" id="5VFS">
    <property type="method" value="EM"/>
    <property type="resolution" value="3.60 A"/>
    <property type="chains" value="a=4-376"/>
</dbReference>
<dbReference type="PDB" id="5VFT">
    <property type="method" value="EM"/>
    <property type="resolution" value="7.00 A"/>
    <property type="chains" value="a=4-376"/>
</dbReference>
<dbReference type="PDB" id="5VFU">
    <property type="method" value="EM"/>
    <property type="resolution" value="5.80 A"/>
    <property type="chains" value="a=4-376"/>
</dbReference>
<dbReference type="PDB" id="5VGZ">
    <property type="method" value="EM"/>
    <property type="resolution" value="3.70 A"/>
    <property type="chains" value="a=3-376"/>
</dbReference>
<dbReference type="PDB" id="5VHF">
    <property type="method" value="EM"/>
    <property type="resolution" value="5.70 A"/>
    <property type="chains" value="a=3-376"/>
</dbReference>
<dbReference type="PDB" id="5VHH">
    <property type="method" value="EM"/>
    <property type="resolution" value="6.10 A"/>
    <property type="chains" value="a=3-376"/>
</dbReference>
<dbReference type="PDB" id="5VHI">
    <property type="method" value="EM"/>
    <property type="resolution" value="6.80 A"/>
    <property type="chains" value="a=3-376"/>
</dbReference>
<dbReference type="PDB" id="5VHS">
    <property type="method" value="EM"/>
    <property type="resolution" value="8.80 A"/>
    <property type="chains" value="a=3-376"/>
</dbReference>
<dbReference type="PDB" id="6MSB">
    <property type="method" value="EM"/>
    <property type="resolution" value="3.00 A"/>
    <property type="chains" value="a=1-376"/>
</dbReference>
<dbReference type="PDB" id="6MSD">
    <property type="method" value="EM"/>
    <property type="resolution" value="3.20 A"/>
    <property type="chains" value="a=1-376"/>
</dbReference>
<dbReference type="PDB" id="6MSE">
    <property type="method" value="EM"/>
    <property type="resolution" value="3.30 A"/>
    <property type="chains" value="G/g=93-137"/>
</dbReference>
<dbReference type="PDB" id="6MSG">
    <property type="method" value="EM"/>
    <property type="resolution" value="3.50 A"/>
    <property type="chains" value="a=1-376"/>
</dbReference>
<dbReference type="PDB" id="6MSH">
    <property type="method" value="EM"/>
    <property type="resolution" value="3.60 A"/>
    <property type="chains" value="a=1-376"/>
</dbReference>
<dbReference type="PDB" id="6MSJ">
    <property type="method" value="EM"/>
    <property type="resolution" value="3.30 A"/>
    <property type="chains" value="a=1-376"/>
</dbReference>
<dbReference type="PDB" id="6MSK">
    <property type="method" value="EM"/>
    <property type="resolution" value="3.20 A"/>
    <property type="chains" value="a=1-376"/>
</dbReference>
<dbReference type="PDB" id="6WJD">
    <property type="method" value="EM"/>
    <property type="resolution" value="4.80 A"/>
    <property type="chains" value="a=1-376"/>
</dbReference>
<dbReference type="PDB" id="6WJN">
    <property type="method" value="EM"/>
    <property type="resolution" value="5.70 A"/>
    <property type="chains" value="a=4-376"/>
</dbReference>
<dbReference type="PDB" id="7QXN">
    <property type="method" value="EM"/>
    <property type="resolution" value="3.70 A"/>
    <property type="chains" value="a=1-376"/>
</dbReference>
<dbReference type="PDB" id="7QXP">
    <property type="method" value="EM"/>
    <property type="resolution" value="3.60 A"/>
    <property type="chains" value="a=1-376"/>
</dbReference>
<dbReference type="PDB" id="7QXU">
    <property type="method" value="EM"/>
    <property type="resolution" value="4.30 A"/>
    <property type="chains" value="a=1-376"/>
</dbReference>
<dbReference type="PDB" id="7QXW">
    <property type="method" value="EM"/>
    <property type="resolution" value="4.10 A"/>
    <property type="chains" value="a=1-376"/>
</dbReference>
<dbReference type="PDB" id="7QXX">
    <property type="method" value="EM"/>
    <property type="resolution" value="4.40 A"/>
    <property type="chains" value="a=1-376"/>
</dbReference>
<dbReference type="PDB" id="7QY7">
    <property type="method" value="EM"/>
    <property type="resolution" value="4.70 A"/>
    <property type="chains" value="a=1-376"/>
</dbReference>
<dbReference type="PDB" id="7QYA">
    <property type="method" value="EM"/>
    <property type="resolution" value="4.80 A"/>
    <property type="chains" value="a=1-376"/>
</dbReference>
<dbReference type="PDB" id="7QYB">
    <property type="method" value="EM"/>
    <property type="resolution" value="4.10 A"/>
    <property type="chains" value="a=1-376"/>
</dbReference>
<dbReference type="PDB" id="7W37">
    <property type="method" value="EM"/>
    <property type="resolution" value="3.00 A"/>
    <property type="chains" value="a=1-376"/>
</dbReference>
<dbReference type="PDB" id="7W38">
    <property type="method" value="EM"/>
    <property type="resolution" value="3.10 A"/>
    <property type="chains" value="a=1-376"/>
</dbReference>
<dbReference type="PDB" id="7W39">
    <property type="method" value="EM"/>
    <property type="resolution" value="3.20 A"/>
    <property type="chains" value="a=1-376"/>
</dbReference>
<dbReference type="PDB" id="7W3A">
    <property type="method" value="EM"/>
    <property type="resolution" value="3.50 A"/>
    <property type="chains" value="a=1-376"/>
</dbReference>
<dbReference type="PDB" id="7W3B">
    <property type="method" value="EM"/>
    <property type="resolution" value="3.60 A"/>
    <property type="chains" value="a=1-376"/>
</dbReference>
<dbReference type="PDB" id="7W3C">
    <property type="method" value="EM"/>
    <property type="resolution" value="3.40 A"/>
    <property type="chains" value="a=1-376"/>
</dbReference>
<dbReference type="PDB" id="7W3F">
    <property type="method" value="EM"/>
    <property type="resolution" value="3.30 A"/>
    <property type="chains" value="a=1-376"/>
</dbReference>
<dbReference type="PDB" id="7W3G">
    <property type="method" value="EM"/>
    <property type="resolution" value="3.20 A"/>
    <property type="chains" value="a=1-376"/>
</dbReference>
<dbReference type="PDB" id="7W3H">
    <property type="method" value="EM"/>
    <property type="resolution" value="3.20 A"/>
    <property type="chains" value="a=1-376"/>
</dbReference>
<dbReference type="PDB" id="7W3I">
    <property type="method" value="EM"/>
    <property type="resolution" value="3.50 A"/>
    <property type="chains" value="a=1-376"/>
</dbReference>
<dbReference type="PDB" id="7W3J">
    <property type="method" value="EM"/>
    <property type="resolution" value="3.50 A"/>
    <property type="chains" value="a=1-376"/>
</dbReference>
<dbReference type="PDB" id="7W3K">
    <property type="method" value="EM"/>
    <property type="resolution" value="3.60 A"/>
    <property type="chains" value="a=1-376"/>
</dbReference>
<dbReference type="PDB" id="7W3M">
    <property type="method" value="EM"/>
    <property type="resolution" value="3.50 A"/>
    <property type="chains" value="a=1-376"/>
</dbReference>
<dbReference type="PDB" id="8CVT">
    <property type="method" value="EM"/>
    <property type="resolution" value="3.00 A"/>
    <property type="chains" value="a=1-376"/>
</dbReference>
<dbReference type="PDB" id="8JRI">
    <property type="method" value="EM"/>
    <property type="resolution" value="3.40 A"/>
    <property type="chains" value="a=1-376"/>
</dbReference>
<dbReference type="PDB" id="8JRT">
    <property type="method" value="EM"/>
    <property type="resolution" value="3.60 A"/>
    <property type="chains" value="a=1-376"/>
</dbReference>
<dbReference type="PDB" id="8JTI">
    <property type="method" value="EM"/>
    <property type="resolution" value="3.80 A"/>
    <property type="chains" value="a=1-376"/>
</dbReference>
<dbReference type="PDB" id="8K0G">
    <property type="method" value="EM"/>
    <property type="resolution" value="3.80 A"/>
    <property type="chains" value="a=1-376"/>
</dbReference>
<dbReference type="PDB" id="8USB">
    <property type="method" value="EM"/>
    <property type="resolution" value="2.73 A"/>
    <property type="chains" value="a=1-376"/>
</dbReference>
<dbReference type="PDB" id="8USC">
    <property type="method" value="EM"/>
    <property type="resolution" value="3.10 A"/>
    <property type="chains" value="a=1-376"/>
</dbReference>
<dbReference type="PDB" id="9E8G">
    <property type="method" value="EM"/>
    <property type="resolution" value="3.01 A"/>
    <property type="chains" value="a=1-376"/>
</dbReference>
<dbReference type="PDB" id="9E8H">
    <property type="method" value="EM"/>
    <property type="resolution" value="2.90 A"/>
    <property type="chains" value="a=1-376"/>
</dbReference>
<dbReference type="PDB" id="9E8I">
    <property type="method" value="EM"/>
    <property type="resolution" value="2.87 A"/>
    <property type="chains" value="a=1-376"/>
</dbReference>
<dbReference type="PDB" id="9E8J">
    <property type="method" value="EM"/>
    <property type="resolution" value="3.47 A"/>
    <property type="chains" value="a=1-376"/>
</dbReference>
<dbReference type="PDB" id="9E8K">
    <property type="method" value="EM"/>
    <property type="resolution" value="4.08 A"/>
    <property type="chains" value="a=1-376"/>
</dbReference>
<dbReference type="PDB" id="9E8L">
    <property type="method" value="EM"/>
    <property type="resolution" value="3.59 A"/>
    <property type="chains" value="a=1-376"/>
</dbReference>
<dbReference type="PDB" id="9E8N">
    <property type="method" value="EM"/>
    <property type="resolution" value="3.62 A"/>
    <property type="chains" value="a=1-376"/>
</dbReference>
<dbReference type="PDB" id="9E8O">
    <property type="method" value="EM"/>
    <property type="resolution" value="3.10 A"/>
    <property type="chains" value="a=1-376"/>
</dbReference>
<dbReference type="PDB" id="9E8Q">
    <property type="method" value="EM"/>
    <property type="resolution" value="3.16 A"/>
    <property type="chains" value="a=1-376"/>
</dbReference>
<dbReference type="PDBsum" id="5GJQ"/>
<dbReference type="PDBsum" id="5GJR"/>
<dbReference type="PDBsum" id="5L4K"/>
<dbReference type="PDBsum" id="5LN3"/>
<dbReference type="PDBsum" id="5M32"/>
<dbReference type="PDBsum" id="5T0C"/>
<dbReference type="PDBsum" id="5T0G"/>
<dbReference type="PDBsum" id="5T0H"/>
<dbReference type="PDBsum" id="5T0I"/>
<dbReference type="PDBsum" id="5T0J"/>
<dbReference type="PDBsum" id="5VFP"/>
<dbReference type="PDBsum" id="5VFQ"/>
<dbReference type="PDBsum" id="5VFR"/>
<dbReference type="PDBsum" id="5VFS"/>
<dbReference type="PDBsum" id="5VFT"/>
<dbReference type="PDBsum" id="5VFU"/>
<dbReference type="PDBsum" id="5VGZ"/>
<dbReference type="PDBsum" id="5VHF"/>
<dbReference type="PDBsum" id="5VHH"/>
<dbReference type="PDBsum" id="5VHI"/>
<dbReference type="PDBsum" id="5VHS"/>
<dbReference type="PDBsum" id="6MSB"/>
<dbReference type="PDBsum" id="6MSD"/>
<dbReference type="PDBsum" id="6MSE"/>
<dbReference type="PDBsum" id="6MSG"/>
<dbReference type="PDBsum" id="6MSH"/>
<dbReference type="PDBsum" id="6MSJ"/>
<dbReference type="PDBsum" id="6MSK"/>
<dbReference type="PDBsum" id="6WJD"/>
<dbReference type="PDBsum" id="6WJN"/>
<dbReference type="PDBsum" id="7QXN"/>
<dbReference type="PDBsum" id="7QXP"/>
<dbReference type="PDBsum" id="7QXU"/>
<dbReference type="PDBsum" id="7QXW"/>
<dbReference type="PDBsum" id="7QXX"/>
<dbReference type="PDBsum" id="7QY7"/>
<dbReference type="PDBsum" id="7QYA"/>
<dbReference type="PDBsum" id="7QYB"/>
<dbReference type="PDBsum" id="7W37"/>
<dbReference type="PDBsum" id="7W38"/>
<dbReference type="PDBsum" id="7W39"/>
<dbReference type="PDBsum" id="7W3A"/>
<dbReference type="PDBsum" id="7W3B"/>
<dbReference type="PDBsum" id="7W3C"/>
<dbReference type="PDBsum" id="7W3F"/>
<dbReference type="PDBsum" id="7W3G"/>
<dbReference type="PDBsum" id="7W3H"/>
<dbReference type="PDBsum" id="7W3I"/>
<dbReference type="PDBsum" id="7W3J"/>
<dbReference type="PDBsum" id="7W3K"/>
<dbReference type="PDBsum" id="7W3M"/>
<dbReference type="PDBsum" id="8CVT"/>
<dbReference type="PDBsum" id="8JRI"/>
<dbReference type="PDBsum" id="8JRT"/>
<dbReference type="PDBsum" id="8JTI"/>
<dbReference type="PDBsum" id="8K0G"/>
<dbReference type="PDBsum" id="8USB"/>
<dbReference type="PDBsum" id="8USC"/>
<dbReference type="PDBsum" id="9E8G"/>
<dbReference type="PDBsum" id="9E8H"/>
<dbReference type="PDBsum" id="9E8I"/>
<dbReference type="PDBsum" id="9E8J"/>
<dbReference type="PDBsum" id="9E8K"/>
<dbReference type="PDBsum" id="9E8L"/>
<dbReference type="PDBsum" id="9E8N"/>
<dbReference type="PDBsum" id="9E8O"/>
<dbReference type="PDBsum" id="9E8Q"/>
<dbReference type="EMDB" id="EMD-14201"/>
<dbReference type="EMDB" id="EMD-14202"/>
<dbReference type="EMDB" id="EMD-14203"/>
<dbReference type="EMDB" id="EMD-14204"/>
<dbReference type="EMDB" id="EMD-14205"/>
<dbReference type="EMDB" id="EMD-14209"/>
<dbReference type="EMDB" id="EMD-14210"/>
<dbReference type="EMDB" id="EMD-14211"/>
<dbReference type="EMDB" id="EMD-21691"/>
<dbReference type="EMDB" id="EMD-21696"/>
<dbReference type="EMDB" id="EMD-27018"/>
<dbReference type="EMDB" id="EMD-32272"/>
<dbReference type="EMDB" id="EMD-32273"/>
<dbReference type="EMDB" id="EMD-32274"/>
<dbReference type="EMDB" id="EMD-32275"/>
<dbReference type="EMDB" id="EMD-32276"/>
<dbReference type="EMDB" id="EMD-32277"/>
<dbReference type="EMDB" id="EMD-32278"/>
<dbReference type="EMDB" id="EMD-32279"/>
<dbReference type="EMDB" id="EMD-32280"/>
<dbReference type="EMDB" id="EMD-32281"/>
<dbReference type="EMDB" id="EMD-32282"/>
<dbReference type="EMDB" id="EMD-32283"/>
<dbReference type="EMDB" id="EMD-32284"/>
<dbReference type="EMDB" id="EMD-36598"/>
<dbReference type="EMDB" id="EMD-36605"/>
<dbReference type="EMDB" id="EMD-36645"/>
<dbReference type="EMDB" id="EMD-36764"/>
<dbReference type="EMDB" id="EMD-4089"/>
<dbReference type="EMDB" id="EMD-4146"/>
<dbReference type="EMDB" id="EMD-42506"/>
<dbReference type="EMDB" id="EMD-42507"/>
<dbReference type="EMDB" id="EMD-47719"/>
<dbReference type="EMDB" id="EMD-47720"/>
<dbReference type="EMDB" id="EMD-47721"/>
<dbReference type="EMDB" id="EMD-47722"/>
<dbReference type="EMDB" id="EMD-47723"/>
<dbReference type="EMDB" id="EMD-47724"/>
<dbReference type="EMDB" id="EMD-47725"/>
<dbReference type="EMDB" id="EMD-47726"/>
<dbReference type="EMDB" id="EMD-47727"/>
<dbReference type="EMDB" id="EMD-60138"/>
<dbReference type="EMDB" id="EMD-60139"/>
<dbReference type="EMDB" id="EMD-8663"/>
<dbReference type="EMDB" id="EMD-8664"/>
<dbReference type="EMDB" id="EMD-8665"/>
<dbReference type="EMDB" id="EMD-8666"/>
<dbReference type="EMDB" id="EMD-8668"/>
<dbReference type="EMDB" id="EMD-8672"/>
<dbReference type="EMDB" id="EMD-8674"/>
<dbReference type="EMDB" id="EMD-8675"/>
<dbReference type="EMDB" id="EMD-8676"/>
<dbReference type="EMDB" id="EMD-8684"/>
<dbReference type="EMDB" id="EMD-9216"/>
<dbReference type="EMDB" id="EMD-9217"/>
<dbReference type="EMDB" id="EMD-9218"/>
<dbReference type="EMDB" id="EMD-9219"/>
<dbReference type="EMDB" id="EMD-9220"/>
<dbReference type="EMDB" id="EMD-9221"/>
<dbReference type="EMDB" id="EMD-9222"/>
<dbReference type="EMDB" id="EMD-9511"/>
<dbReference type="EMDB" id="EMD-9512"/>
<dbReference type="SMR" id="Q9UNM6"/>
<dbReference type="BioGRID" id="111691">
    <property type="interactions" value="315"/>
</dbReference>
<dbReference type="ComplexPortal" id="CPX-5993">
    <property type="entry name" value="26S proteasome complex"/>
</dbReference>
<dbReference type="ComplexPortal" id="CPX-8964">
    <property type="entry name" value="19S proteasome regulatory complex"/>
</dbReference>
<dbReference type="ComplexPortal" id="CPX-9082">
    <property type="entry name" value="19S-20S-PA28-alphabeta hybrid proteasome complex"/>
</dbReference>
<dbReference type="ComplexPortal" id="CPX-9085">
    <property type="entry name" value="19S-20S-PA28-gamma hybrid proteasome complex"/>
</dbReference>
<dbReference type="ComplexPortal" id="CPX-9086">
    <property type="entry name" value="30S proteasome complex"/>
</dbReference>
<dbReference type="CORUM" id="Q9UNM6"/>
<dbReference type="DIP" id="DIP-27576N"/>
<dbReference type="FunCoup" id="Q9UNM6">
    <property type="interactions" value="3139"/>
</dbReference>
<dbReference type="IntAct" id="Q9UNM6">
    <property type="interactions" value="115"/>
</dbReference>
<dbReference type="MINT" id="Q9UNM6"/>
<dbReference type="STRING" id="9606.ENSP00000396937"/>
<dbReference type="ChEMBL" id="CHEMBL2364701"/>
<dbReference type="GlyGen" id="Q9UNM6">
    <property type="glycosylation" value="1 site, 1 O-linked glycan (1 site)"/>
</dbReference>
<dbReference type="iPTMnet" id="Q9UNM6"/>
<dbReference type="MetOSite" id="Q9UNM6"/>
<dbReference type="PhosphoSitePlus" id="Q9UNM6"/>
<dbReference type="SwissPalm" id="Q9UNM6"/>
<dbReference type="BioMuta" id="PSMD13"/>
<dbReference type="DMDM" id="317373273"/>
<dbReference type="jPOST" id="Q9UNM6"/>
<dbReference type="MassIVE" id="Q9UNM6"/>
<dbReference type="PaxDb" id="9606-ENSP00000396937"/>
<dbReference type="PeptideAtlas" id="Q9UNM6"/>
<dbReference type="ProteomicsDB" id="85311">
    <molecule id="Q9UNM6-1"/>
</dbReference>
<dbReference type="ProteomicsDB" id="85312">
    <molecule id="Q9UNM6-2"/>
</dbReference>
<dbReference type="Pumba" id="Q9UNM6"/>
<dbReference type="Antibodypedia" id="22386">
    <property type="antibodies" value="190 antibodies from 31 providers"/>
</dbReference>
<dbReference type="DNASU" id="5719"/>
<dbReference type="Ensembl" id="ENST00000431206.6">
    <molecule id="Q9UNM6-2"/>
    <property type="protein sequence ID" value="ENSP00000396937.2"/>
    <property type="gene ID" value="ENSG00000185627.19"/>
</dbReference>
<dbReference type="Ensembl" id="ENST00000532097.6">
    <molecule id="Q9UNM6-1"/>
    <property type="protein sequence ID" value="ENSP00000436186.1"/>
    <property type="gene ID" value="ENSG00000185627.19"/>
</dbReference>
<dbReference type="GeneID" id="5719"/>
<dbReference type="KEGG" id="hsa:5719"/>
<dbReference type="MANE-Select" id="ENST00000532097.6">
    <property type="protein sequence ID" value="ENSP00000436186.1"/>
    <property type="RefSeq nucleotide sequence ID" value="NM_002817.4"/>
    <property type="RefSeq protein sequence ID" value="NP_002808.3"/>
</dbReference>
<dbReference type="UCSC" id="uc001lol.3">
    <molecule id="Q9UNM6-1"/>
    <property type="organism name" value="human"/>
</dbReference>
<dbReference type="AGR" id="HGNC:9558"/>
<dbReference type="CTD" id="5719"/>
<dbReference type="DisGeNET" id="5719"/>
<dbReference type="GeneCards" id="PSMD13"/>
<dbReference type="HGNC" id="HGNC:9558">
    <property type="gene designation" value="PSMD13"/>
</dbReference>
<dbReference type="HPA" id="ENSG00000185627">
    <property type="expression patterns" value="Low tissue specificity"/>
</dbReference>
<dbReference type="MIM" id="603481">
    <property type="type" value="gene"/>
</dbReference>
<dbReference type="neXtProt" id="NX_Q9UNM6"/>
<dbReference type="OpenTargets" id="ENSG00000185627"/>
<dbReference type="PharmGKB" id="PA33904"/>
<dbReference type="VEuPathDB" id="HostDB:ENSG00000185627"/>
<dbReference type="GeneTree" id="ENSGT00390000001802"/>
<dbReference type="InParanoid" id="Q9UNM6"/>
<dbReference type="OMA" id="SFEDYWE"/>
<dbReference type="OrthoDB" id="1093at2759"/>
<dbReference type="PAN-GO" id="Q9UNM6">
    <property type="GO annotations" value="5 GO annotations based on evolutionary models"/>
</dbReference>
<dbReference type="PhylomeDB" id="Q9UNM6"/>
<dbReference type="TreeFam" id="TF105612"/>
<dbReference type="PathwayCommons" id="Q9UNM6"/>
<dbReference type="Reactome" id="R-HSA-1169091">
    <property type="pathway name" value="Activation of NF-kappaB in B cells"/>
</dbReference>
<dbReference type="Reactome" id="R-HSA-1234176">
    <property type="pathway name" value="Oxygen-dependent proline hydroxylation of Hypoxia-inducible Factor Alpha"/>
</dbReference>
<dbReference type="Reactome" id="R-HSA-1236974">
    <property type="pathway name" value="ER-Phagosome pathway"/>
</dbReference>
<dbReference type="Reactome" id="R-HSA-1236978">
    <property type="pathway name" value="Cross-presentation of soluble exogenous antigens (endosomes)"/>
</dbReference>
<dbReference type="Reactome" id="R-HSA-174084">
    <property type="pathway name" value="Autodegradation of Cdh1 by Cdh1:APC/C"/>
</dbReference>
<dbReference type="Reactome" id="R-HSA-174113">
    <property type="pathway name" value="SCF-beta-TrCP mediated degradation of Emi1"/>
</dbReference>
<dbReference type="Reactome" id="R-HSA-174154">
    <property type="pathway name" value="APC/C:Cdc20 mediated degradation of Securin"/>
</dbReference>
<dbReference type="Reactome" id="R-HSA-174178">
    <property type="pathway name" value="APC/C:Cdh1 mediated degradation of Cdc20 and other APC/C:Cdh1 targeted proteins in late mitosis/early G1"/>
</dbReference>
<dbReference type="Reactome" id="R-HSA-174184">
    <property type="pathway name" value="Cdc20:Phospho-APC/C mediated degradation of Cyclin A"/>
</dbReference>
<dbReference type="Reactome" id="R-HSA-180534">
    <property type="pathway name" value="Vpu mediated degradation of CD4"/>
</dbReference>
<dbReference type="Reactome" id="R-HSA-180585">
    <property type="pathway name" value="Vif-mediated degradation of APOBEC3G"/>
</dbReference>
<dbReference type="Reactome" id="R-HSA-187577">
    <property type="pathway name" value="SCF(Skp2)-mediated degradation of p27/p21"/>
</dbReference>
<dbReference type="Reactome" id="R-HSA-195253">
    <property type="pathway name" value="Degradation of beta-catenin by the destruction complex"/>
</dbReference>
<dbReference type="Reactome" id="R-HSA-202424">
    <property type="pathway name" value="Downstream TCR signaling"/>
</dbReference>
<dbReference type="Reactome" id="R-HSA-211733">
    <property type="pathway name" value="Regulation of activated PAK-2p34 by proteasome mediated degradation"/>
</dbReference>
<dbReference type="Reactome" id="R-HSA-2467813">
    <property type="pathway name" value="Separation of Sister Chromatids"/>
</dbReference>
<dbReference type="Reactome" id="R-HSA-2871837">
    <property type="pathway name" value="FCERI mediated NF-kB activation"/>
</dbReference>
<dbReference type="Reactome" id="R-HSA-349425">
    <property type="pathway name" value="Autodegradation of the E3 ubiquitin ligase COP1"/>
</dbReference>
<dbReference type="Reactome" id="R-HSA-350562">
    <property type="pathway name" value="Regulation of ornithine decarboxylase (ODC)"/>
</dbReference>
<dbReference type="Reactome" id="R-HSA-382556">
    <property type="pathway name" value="ABC-family proteins mediated transport"/>
</dbReference>
<dbReference type="Reactome" id="R-HSA-450408">
    <property type="pathway name" value="AUF1 (hnRNP D0) binds and destabilizes mRNA"/>
</dbReference>
<dbReference type="Reactome" id="R-HSA-4608870">
    <property type="pathway name" value="Asymmetric localization of PCP proteins"/>
</dbReference>
<dbReference type="Reactome" id="R-HSA-4641257">
    <property type="pathway name" value="Degradation of AXIN"/>
</dbReference>
<dbReference type="Reactome" id="R-HSA-4641258">
    <property type="pathway name" value="Degradation of DVL"/>
</dbReference>
<dbReference type="Reactome" id="R-HSA-5358346">
    <property type="pathway name" value="Hedgehog ligand biogenesis"/>
</dbReference>
<dbReference type="Reactome" id="R-HSA-5362768">
    <property type="pathway name" value="Hh mutants are degraded by ERAD"/>
</dbReference>
<dbReference type="Reactome" id="R-HSA-5607761">
    <property type="pathway name" value="Dectin-1 mediated noncanonical NF-kB signaling"/>
</dbReference>
<dbReference type="Reactome" id="R-HSA-5607764">
    <property type="pathway name" value="CLEC7A (Dectin-1) signaling"/>
</dbReference>
<dbReference type="Reactome" id="R-HSA-5610780">
    <property type="pathway name" value="Degradation of GLI1 by the proteasome"/>
</dbReference>
<dbReference type="Reactome" id="R-HSA-5610783">
    <property type="pathway name" value="Degradation of GLI2 by the proteasome"/>
</dbReference>
<dbReference type="Reactome" id="R-HSA-5610785">
    <property type="pathway name" value="GLI3 is processed to GLI3R by the proteasome"/>
</dbReference>
<dbReference type="Reactome" id="R-HSA-5632684">
    <property type="pathway name" value="Hedgehog 'on' state"/>
</dbReference>
<dbReference type="Reactome" id="R-HSA-5658442">
    <property type="pathway name" value="Regulation of RAS by GAPs"/>
</dbReference>
<dbReference type="Reactome" id="R-HSA-5668541">
    <property type="pathway name" value="TNFR2 non-canonical NF-kB pathway"/>
</dbReference>
<dbReference type="Reactome" id="R-HSA-5676590">
    <property type="pathway name" value="NIK--&gt;noncanonical NF-kB signaling"/>
</dbReference>
<dbReference type="Reactome" id="R-HSA-5678895">
    <property type="pathway name" value="Defective CFTR causes cystic fibrosis"/>
</dbReference>
<dbReference type="Reactome" id="R-HSA-5687128">
    <property type="pathway name" value="MAPK6/MAPK4 signaling"/>
</dbReference>
<dbReference type="Reactome" id="R-HSA-5689603">
    <property type="pathway name" value="UCH proteinases"/>
</dbReference>
<dbReference type="Reactome" id="R-HSA-5689880">
    <property type="pathway name" value="Ub-specific processing proteases"/>
</dbReference>
<dbReference type="Reactome" id="R-HSA-6798695">
    <property type="pathway name" value="Neutrophil degranulation"/>
</dbReference>
<dbReference type="Reactome" id="R-HSA-68867">
    <property type="pathway name" value="Assembly of the pre-replicative complex"/>
</dbReference>
<dbReference type="Reactome" id="R-HSA-68949">
    <property type="pathway name" value="Orc1 removal from chromatin"/>
</dbReference>
<dbReference type="Reactome" id="R-HSA-69017">
    <property type="pathway name" value="CDK-mediated phosphorylation and removal of Cdc6"/>
</dbReference>
<dbReference type="Reactome" id="R-HSA-69481">
    <property type="pathway name" value="G2/M Checkpoints"/>
</dbReference>
<dbReference type="Reactome" id="R-HSA-69601">
    <property type="pathway name" value="Ubiquitin Mediated Degradation of Phosphorylated Cdc25A"/>
</dbReference>
<dbReference type="Reactome" id="R-HSA-75815">
    <property type="pathway name" value="Ubiquitin-dependent degradation of Cyclin D"/>
</dbReference>
<dbReference type="Reactome" id="R-HSA-8852276">
    <property type="pathway name" value="The role of GTSE1 in G2/M progression after G2 checkpoint"/>
</dbReference>
<dbReference type="Reactome" id="R-HSA-8854050">
    <property type="pathway name" value="FBXL7 down-regulates AURKA during mitotic entry and in early mitosis"/>
</dbReference>
<dbReference type="Reactome" id="R-HSA-8939236">
    <property type="pathway name" value="RUNX1 regulates transcription of genes involved in differentiation of HSCs"/>
</dbReference>
<dbReference type="Reactome" id="R-HSA-8939902">
    <property type="pathway name" value="Regulation of RUNX2 expression and activity"/>
</dbReference>
<dbReference type="Reactome" id="R-HSA-8941858">
    <property type="pathway name" value="Regulation of RUNX3 expression and activity"/>
</dbReference>
<dbReference type="Reactome" id="R-HSA-8948751">
    <property type="pathway name" value="Regulation of PTEN stability and activity"/>
</dbReference>
<dbReference type="Reactome" id="R-HSA-8951664">
    <property type="pathway name" value="Neddylation"/>
</dbReference>
<dbReference type="Reactome" id="R-HSA-9010553">
    <property type="pathway name" value="Regulation of expression of SLITs and ROBOs"/>
</dbReference>
<dbReference type="Reactome" id="R-HSA-9020702">
    <property type="pathway name" value="Interleukin-1 signaling"/>
</dbReference>
<dbReference type="Reactome" id="R-HSA-9604323">
    <property type="pathway name" value="Negative regulation of NOTCH4 signaling"/>
</dbReference>
<dbReference type="Reactome" id="R-HSA-9755511">
    <property type="pathway name" value="KEAP1-NFE2L2 pathway"/>
</dbReference>
<dbReference type="Reactome" id="R-HSA-9762114">
    <property type="pathway name" value="GSK3B and BTRC:CUL1-mediated-degradation of NFE2L2"/>
</dbReference>
<dbReference type="Reactome" id="R-HSA-9824272">
    <property type="pathway name" value="Somitogenesis"/>
</dbReference>
<dbReference type="Reactome" id="R-HSA-983168">
    <property type="pathway name" value="Antigen processing: Ubiquitination &amp; Proteasome degradation"/>
</dbReference>
<dbReference type="Reactome" id="R-HSA-9907900">
    <property type="pathway name" value="Proteasome assembly"/>
</dbReference>
<dbReference type="SignaLink" id="Q9UNM6"/>
<dbReference type="SIGNOR" id="Q9UNM6"/>
<dbReference type="BioGRID-ORCS" id="5719">
    <property type="hits" value="757 hits in 1159 CRISPR screens"/>
</dbReference>
<dbReference type="CD-CODE" id="91857CE7">
    <property type="entry name" value="Nucleolus"/>
</dbReference>
<dbReference type="ChiTaRS" id="PSMD13">
    <property type="organism name" value="human"/>
</dbReference>
<dbReference type="GeneWiki" id="PSMD13"/>
<dbReference type="GenomeRNAi" id="5719"/>
<dbReference type="Pharos" id="Q9UNM6">
    <property type="development level" value="Tbio"/>
</dbReference>
<dbReference type="PRO" id="PR:Q9UNM6"/>
<dbReference type="Proteomes" id="UP000005640">
    <property type="component" value="Chromosome 11"/>
</dbReference>
<dbReference type="RNAct" id="Q9UNM6">
    <property type="molecule type" value="protein"/>
</dbReference>
<dbReference type="Bgee" id="ENSG00000185627">
    <property type="expression patterns" value="Expressed in granulocyte and 208 other cell types or tissues"/>
</dbReference>
<dbReference type="ExpressionAtlas" id="Q9UNM6">
    <property type="expression patterns" value="baseline and differential"/>
</dbReference>
<dbReference type="GO" id="GO:0005829">
    <property type="term" value="C:cytosol"/>
    <property type="evidence" value="ECO:0000318"/>
    <property type="project" value="GO_Central"/>
</dbReference>
<dbReference type="GO" id="GO:0005576">
    <property type="term" value="C:extracellular region"/>
    <property type="evidence" value="ECO:0000304"/>
    <property type="project" value="Reactome"/>
</dbReference>
<dbReference type="GO" id="GO:1904813">
    <property type="term" value="C:ficolin-1-rich granule lumen"/>
    <property type="evidence" value="ECO:0000304"/>
    <property type="project" value="Reactome"/>
</dbReference>
<dbReference type="GO" id="GO:0016020">
    <property type="term" value="C:membrane"/>
    <property type="evidence" value="ECO:0007005"/>
    <property type="project" value="UniProtKB"/>
</dbReference>
<dbReference type="GO" id="GO:0005654">
    <property type="term" value="C:nucleoplasm"/>
    <property type="evidence" value="ECO:0000304"/>
    <property type="project" value="Reactome"/>
</dbReference>
<dbReference type="GO" id="GO:0005634">
    <property type="term" value="C:nucleus"/>
    <property type="evidence" value="ECO:0007005"/>
    <property type="project" value="UniProtKB"/>
</dbReference>
<dbReference type="GO" id="GO:0022624">
    <property type="term" value="C:proteasome accessory complex"/>
    <property type="evidence" value="ECO:0000250"/>
    <property type="project" value="UniProtKB"/>
</dbReference>
<dbReference type="GO" id="GO:0000502">
    <property type="term" value="C:proteasome complex"/>
    <property type="evidence" value="ECO:0000314"/>
    <property type="project" value="UniProtKB"/>
</dbReference>
<dbReference type="GO" id="GO:0005838">
    <property type="term" value="C:proteasome regulatory particle"/>
    <property type="evidence" value="ECO:0000304"/>
    <property type="project" value="ProtInc"/>
</dbReference>
<dbReference type="GO" id="GO:0008541">
    <property type="term" value="C:proteasome regulatory particle, lid subcomplex"/>
    <property type="evidence" value="ECO:0000318"/>
    <property type="project" value="GO_Central"/>
</dbReference>
<dbReference type="GO" id="GO:0034774">
    <property type="term" value="C:secretory granule lumen"/>
    <property type="evidence" value="ECO:0000304"/>
    <property type="project" value="Reactome"/>
</dbReference>
<dbReference type="GO" id="GO:0005198">
    <property type="term" value="F:structural molecule activity"/>
    <property type="evidence" value="ECO:0000318"/>
    <property type="project" value="GO_Central"/>
</dbReference>
<dbReference type="GO" id="GO:0007127">
    <property type="term" value="P:meiosis I"/>
    <property type="evidence" value="ECO:0007669"/>
    <property type="project" value="Ensembl"/>
</dbReference>
<dbReference type="GO" id="GO:0043161">
    <property type="term" value="P:proteasome-mediated ubiquitin-dependent protein catabolic process"/>
    <property type="evidence" value="ECO:0000303"/>
    <property type="project" value="ComplexPortal"/>
</dbReference>
<dbReference type="GO" id="GO:0006511">
    <property type="term" value="P:ubiquitin-dependent protein catabolic process"/>
    <property type="evidence" value="ECO:0000318"/>
    <property type="project" value="GO_Central"/>
</dbReference>
<dbReference type="InterPro" id="IPR000717">
    <property type="entry name" value="PCI_dom"/>
</dbReference>
<dbReference type="InterPro" id="IPR054179">
    <property type="entry name" value="PSD13_N"/>
</dbReference>
<dbReference type="InterPro" id="IPR035298">
    <property type="entry name" value="PSMD13"/>
</dbReference>
<dbReference type="InterPro" id="IPR036390">
    <property type="entry name" value="WH_DNA-bd_sf"/>
</dbReference>
<dbReference type="PANTHER" id="PTHR10539">
    <property type="entry name" value="26S PROTEASOME NON-ATPASE REGULATORY SUBUNIT 13"/>
    <property type="match status" value="1"/>
</dbReference>
<dbReference type="PANTHER" id="PTHR10539:SF0">
    <property type="entry name" value="26S PROTEASOME NON-ATPASE REGULATORY SUBUNIT 13"/>
    <property type="match status" value="1"/>
</dbReference>
<dbReference type="Pfam" id="PF01399">
    <property type="entry name" value="PCI"/>
    <property type="match status" value="1"/>
</dbReference>
<dbReference type="Pfam" id="PF22037">
    <property type="entry name" value="PSD13_N"/>
    <property type="match status" value="1"/>
</dbReference>
<dbReference type="SMART" id="SM00088">
    <property type="entry name" value="PINT"/>
    <property type="match status" value="1"/>
</dbReference>
<dbReference type="SUPFAM" id="SSF46785">
    <property type="entry name" value="Winged helix' DNA-binding domain"/>
    <property type="match status" value="1"/>
</dbReference>
<dbReference type="PROSITE" id="PS50250">
    <property type="entry name" value="PCI"/>
    <property type="match status" value="1"/>
</dbReference>
<sequence length="376" mass="42945">MKDVPGFLQQSQNSGPGQPAVWHRLEELYTKKLWHQLTLQVLDFVQDPCFAQGDGLIKLYENFISEFEHRVNPLSLVEIILHVVRQMTDPNVALTFLEKTREKVKSSDEAVILCKTAIGALKLNIGDLQVTKETIEDVEEMLNNLPGVTSVHSRFYDLSSKYYQTIGNHASYYKDALRFLGCVDIKDLPVSEQQERAFTLGLAGLLGEGVFNFGELLMHPVLESLRNTDRQWLIDTLYAFNSGNVERFQTLKTAWGQQPDLAANEAQLLRKIQLLCLMEMTFTRPANHRQLTFEEIAKSAKITVNEVELLVMKALSVGLVKGSIDEVDKRVHMTWVQPRVLDLQQIKGMKDRLEFWCTDVKSMEMLVEHQAHDILT</sequence>
<evidence type="ECO:0000255" key="1">
    <source>
        <dbReference type="PROSITE-ProRule" id="PRU01185"/>
    </source>
</evidence>
<evidence type="ECO:0000269" key="2">
    <source>
    </source>
</evidence>
<evidence type="ECO:0000269" key="3">
    <source>
    </source>
</evidence>
<evidence type="ECO:0000269" key="4">
    <source>
    </source>
</evidence>
<evidence type="ECO:0000269" key="5">
    <source>
    </source>
</evidence>
<evidence type="ECO:0000269" key="6">
    <source>
    </source>
</evidence>
<evidence type="ECO:0000269" key="7">
    <source ref="2"/>
</evidence>
<evidence type="ECO:0000269" key="8">
    <source ref="4"/>
</evidence>
<evidence type="ECO:0000269" key="9">
    <source ref="7"/>
</evidence>
<evidence type="ECO:0000303" key="10">
    <source>
    </source>
</evidence>
<evidence type="ECO:0000305" key="11"/>
<evidence type="ECO:0007744" key="12">
    <source>
    </source>
</evidence>
<evidence type="ECO:0007744" key="13">
    <source>
    </source>
</evidence>
<evidence type="ECO:0007829" key="14">
    <source>
        <dbReference type="PDB" id="9E8J"/>
    </source>
</evidence>
<organism>
    <name type="scientific">Homo sapiens</name>
    <name type="common">Human</name>
    <dbReference type="NCBI Taxonomy" id="9606"/>
    <lineage>
        <taxon>Eukaryota</taxon>
        <taxon>Metazoa</taxon>
        <taxon>Chordata</taxon>
        <taxon>Craniata</taxon>
        <taxon>Vertebrata</taxon>
        <taxon>Euteleostomi</taxon>
        <taxon>Mammalia</taxon>
        <taxon>Eutheria</taxon>
        <taxon>Euarchontoglires</taxon>
        <taxon>Primates</taxon>
        <taxon>Haplorrhini</taxon>
        <taxon>Catarrhini</taxon>
        <taxon>Hominidae</taxon>
        <taxon>Homo</taxon>
    </lineage>
</organism>